<keyword id="KW-0143">Chaperone</keyword>
<keyword id="KW-0963">Cytoplasm</keyword>
<keyword id="KW-0996">Nickel insertion</keyword>
<keyword id="KW-1185">Reference proteome</keyword>
<proteinExistence type="inferred from homology"/>
<comment type="function">
    <text evidence="1">Required for maturation of urease via the functional incorporation of the urease nickel metallocenter.</text>
</comment>
<comment type="subunit">
    <text evidence="1">UreD, UreF and UreG form a complex that acts as a GTP-hydrolysis-dependent molecular chaperone, activating the urease apoprotein by helping to assemble the nickel containing metallocenter of UreC. The UreE protein probably delivers the nickel.</text>
</comment>
<comment type="subcellular location">
    <subcellularLocation>
        <location evidence="1">Cytoplasm</location>
    </subcellularLocation>
</comment>
<comment type="similarity">
    <text evidence="1">Belongs to the UreF family.</text>
</comment>
<dbReference type="EMBL" id="BX571866">
    <property type="protein sequence ID" value="CAE14468.1"/>
    <property type="molecule type" value="Genomic_DNA"/>
</dbReference>
<dbReference type="RefSeq" id="WP_011146429.1">
    <property type="nucleotide sequence ID" value="NC_005126.1"/>
</dbReference>
<dbReference type="SMR" id="Q7N4Y5"/>
<dbReference type="STRING" id="243265.plu2175"/>
<dbReference type="GeneID" id="48848453"/>
<dbReference type="KEGG" id="plu:plu2175"/>
<dbReference type="eggNOG" id="COG0830">
    <property type="taxonomic scope" value="Bacteria"/>
</dbReference>
<dbReference type="HOGENOM" id="CLU_049215_4_0_6"/>
<dbReference type="OrthoDB" id="9798772at2"/>
<dbReference type="Proteomes" id="UP000002514">
    <property type="component" value="Chromosome"/>
</dbReference>
<dbReference type="GO" id="GO:0005737">
    <property type="term" value="C:cytoplasm"/>
    <property type="evidence" value="ECO:0007669"/>
    <property type="project" value="UniProtKB-SubCell"/>
</dbReference>
<dbReference type="GO" id="GO:0016151">
    <property type="term" value="F:nickel cation binding"/>
    <property type="evidence" value="ECO:0007669"/>
    <property type="project" value="UniProtKB-UniRule"/>
</dbReference>
<dbReference type="Gene3D" id="1.10.4190.10">
    <property type="entry name" value="Urease accessory protein UreF"/>
    <property type="match status" value="1"/>
</dbReference>
<dbReference type="HAMAP" id="MF_01385">
    <property type="entry name" value="UreF"/>
    <property type="match status" value="1"/>
</dbReference>
<dbReference type="InterPro" id="IPR002639">
    <property type="entry name" value="UreF"/>
</dbReference>
<dbReference type="InterPro" id="IPR038277">
    <property type="entry name" value="UreF_sf"/>
</dbReference>
<dbReference type="PANTHER" id="PTHR33620">
    <property type="entry name" value="UREASE ACCESSORY PROTEIN F"/>
    <property type="match status" value="1"/>
</dbReference>
<dbReference type="PANTHER" id="PTHR33620:SF1">
    <property type="entry name" value="UREASE ACCESSORY PROTEIN F"/>
    <property type="match status" value="1"/>
</dbReference>
<dbReference type="Pfam" id="PF01730">
    <property type="entry name" value="UreF"/>
    <property type="match status" value="1"/>
</dbReference>
<dbReference type="PIRSF" id="PIRSF009467">
    <property type="entry name" value="Ureas_acces_UreF"/>
    <property type="match status" value="1"/>
</dbReference>
<organism>
    <name type="scientific">Photorhabdus laumondii subsp. laumondii (strain DSM 15139 / CIP 105565 / TT01)</name>
    <name type="common">Photorhabdus luminescens subsp. laumondii</name>
    <dbReference type="NCBI Taxonomy" id="243265"/>
    <lineage>
        <taxon>Bacteria</taxon>
        <taxon>Pseudomonadati</taxon>
        <taxon>Pseudomonadota</taxon>
        <taxon>Gammaproteobacteria</taxon>
        <taxon>Enterobacterales</taxon>
        <taxon>Morganellaceae</taxon>
        <taxon>Photorhabdus</taxon>
    </lineage>
</organism>
<name>UREF_PHOLL</name>
<accession>Q7N4Y5</accession>
<evidence type="ECO:0000255" key="1">
    <source>
        <dbReference type="HAMAP-Rule" id="MF_01385"/>
    </source>
</evidence>
<sequence length="228" mass="24901">MNALRLIRIMQFADSVLPVGAFSFSNGLESAIQSKIVYDVATLSDFTRTALLQAVSSDGRAVMAACQALNSGQHDAAISHDWAIFNRKLNEESRTMVTRMGKKLAEMAVEVTGESLIAWWLAQIKSDIAAGTYPITLAVVMSALGAAPREVIVMHQYGVAMTILSAAIRLMRVTHIDIQRILFSLNQDIELFCDEAEKGGIEQMTSYAPMTDVLAALHVSAFTRLFSN</sequence>
<gene>
    <name evidence="1" type="primary">ureF</name>
    <name type="ordered locus">plu2175</name>
</gene>
<reference key="1">
    <citation type="journal article" date="2003" name="Nat. Biotechnol.">
        <title>The genome sequence of the entomopathogenic bacterium Photorhabdus luminescens.</title>
        <authorList>
            <person name="Duchaud E."/>
            <person name="Rusniok C."/>
            <person name="Frangeul L."/>
            <person name="Buchrieser C."/>
            <person name="Givaudan A."/>
            <person name="Taourit S."/>
            <person name="Bocs S."/>
            <person name="Boursaux-Eude C."/>
            <person name="Chandler M."/>
            <person name="Charles J.-F."/>
            <person name="Dassa E."/>
            <person name="Derose R."/>
            <person name="Derzelle S."/>
            <person name="Freyssinet G."/>
            <person name="Gaudriault S."/>
            <person name="Medigue C."/>
            <person name="Lanois A."/>
            <person name="Powell K."/>
            <person name="Siguier P."/>
            <person name="Vincent R."/>
            <person name="Wingate V."/>
            <person name="Zouine M."/>
            <person name="Glaser P."/>
            <person name="Boemare N."/>
            <person name="Danchin A."/>
            <person name="Kunst F."/>
        </authorList>
    </citation>
    <scope>NUCLEOTIDE SEQUENCE [LARGE SCALE GENOMIC DNA]</scope>
    <source>
        <strain>DSM 15139 / CIP 105565 / TT01</strain>
    </source>
</reference>
<protein>
    <recommendedName>
        <fullName evidence="1">Urease accessory protein UreF</fullName>
    </recommendedName>
</protein>
<feature type="chain" id="PRO_1000145127" description="Urease accessory protein UreF">
    <location>
        <begin position="1"/>
        <end position="228"/>
    </location>
</feature>